<evidence type="ECO:0000255" key="1">
    <source>
        <dbReference type="HAMAP-Rule" id="MF_00692"/>
    </source>
</evidence>
<dbReference type="EC" id="2.7.7.-" evidence="1"/>
<dbReference type="EC" id="2.7.7.108" evidence="1"/>
<dbReference type="EMBL" id="CP000453">
    <property type="protein sequence ID" value="ABI56398.1"/>
    <property type="molecule type" value="Genomic_DNA"/>
</dbReference>
<dbReference type="RefSeq" id="WP_011628793.1">
    <property type="nucleotide sequence ID" value="NC_008340.1"/>
</dbReference>
<dbReference type="SMR" id="Q0A9T9"/>
<dbReference type="KEGG" id="aeh:Mlg_1045"/>
<dbReference type="eggNOG" id="COG0397">
    <property type="taxonomic scope" value="Bacteria"/>
</dbReference>
<dbReference type="HOGENOM" id="CLU_010245_4_0_6"/>
<dbReference type="OrthoDB" id="9776281at2"/>
<dbReference type="Proteomes" id="UP000001962">
    <property type="component" value="Chromosome"/>
</dbReference>
<dbReference type="GO" id="GO:0070733">
    <property type="term" value="F:AMPylase activity"/>
    <property type="evidence" value="ECO:0007669"/>
    <property type="project" value="RHEA"/>
</dbReference>
<dbReference type="GO" id="GO:0005524">
    <property type="term" value="F:ATP binding"/>
    <property type="evidence" value="ECO:0007669"/>
    <property type="project" value="UniProtKB-UniRule"/>
</dbReference>
<dbReference type="GO" id="GO:0000287">
    <property type="term" value="F:magnesium ion binding"/>
    <property type="evidence" value="ECO:0007669"/>
    <property type="project" value="UniProtKB-UniRule"/>
</dbReference>
<dbReference type="HAMAP" id="MF_00692">
    <property type="entry name" value="YdiU_SelO"/>
    <property type="match status" value="1"/>
</dbReference>
<dbReference type="InterPro" id="IPR003846">
    <property type="entry name" value="SelO"/>
</dbReference>
<dbReference type="NCBIfam" id="NF000658">
    <property type="entry name" value="PRK00029.1"/>
    <property type="match status" value="1"/>
</dbReference>
<dbReference type="PANTHER" id="PTHR32057">
    <property type="entry name" value="PROTEIN ADENYLYLTRANSFERASE SELO, MITOCHONDRIAL"/>
    <property type="match status" value="1"/>
</dbReference>
<dbReference type="PANTHER" id="PTHR32057:SF14">
    <property type="entry name" value="PROTEIN ADENYLYLTRANSFERASE SELO, MITOCHONDRIAL"/>
    <property type="match status" value="1"/>
</dbReference>
<dbReference type="Pfam" id="PF02696">
    <property type="entry name" value="SelO"/>
    <property type="match status" value="1"/>
</dbReference>
<comment type="function">
    <text evidence="1">Nucleotidyltransferase involved in the post-translational modification of proteins. It can catalyze the addition of adenosine monophosphate (AMP) or uridine monophosphate (UMP) to a protein, resulting in modifications known as AMPylation and UMPylation.</text>
</comment>
<comment type="catalytic activity">
    <reaction evidence="1">
        <text>L-seryl-[protein] + ATP = 3-O-(5'-adenylyl)-L-seryl-[protein] + diphosphate</text>
        <dbReference type="Rhea" id="RHEA:58120"/>
        <dbReference type="Rhea" id="RHEA-COMP:9863"/>
        <dbReference type="Rhea" id="RHEA-COMP:15073"/>
        <dbReference type="ChEBI" id="CHEBI:29999"/>
        <dbReference type="ChEBI" id="CHEBI:30616"/>
        <dbReference type="ChEBI" id="CHEBI:33019"/>
        <dbReference type="ChEBI" id="CHEBI:142516"/>
        <dbReference type="EC" id="2.7.7.108"/>
    </reaction>
</comment>
<comment type="catalytic activity">
    <reaction evidence="1">
        <text>L-threonyl-[protein] + ATP = 3-O-(5'-adenylyl)-L-threonyl-[protein] + diphosphate</text>
        <dbReference type="Rhea" id="RHEA:54292"/>
        <dbReference type="Rhea" id="RHEA-COMP:11060"/>
        <dbReference type="Rhea" id="RHEA-COMP:13847"/>
        <dbReference type="ChEBI" id="CHEBI:30013"/>
        <dbReference type="ChEBI" id="CHEBI:30616"/>
        <dbReference type="ChEBI" id="CHEBI:33019"/>
        <dbReference type="ChEBI" id="CHEBI:138113"/>
        <dbReference type="EC" id="2.7.7.108"/>
    </reaction>
</comment>
<comment type="catalytic activity">
    <reaction evidence="1">
        <text>L-tyrosyl-[protein] + ATP = O-(5'-adenylyl)-L-tyrosyl-[protein] + diphosphate</text>
        <dbReference type="Rhea" id="RHEA:54288"/>
        <dbReference type="Rhea" id="RHEA-COMP:10136"/>
        <dbReference type="Rhea" id="RHEA-COMP:13846"/>
        <dbReference type="ChEBI" id="CHEBI:30616"/>
        <dbReference type="ChEBI" id="CHEBI:33019"/>
        <dbReference type="ChEBI" id="CHEBI:46858"/>
        <dbReference type="ChEBI" id="CHEBI:83624"/>
        <dbReference type="EC" id="2.7.7.108"/>
    </reaction>
</comment>
<comment type="catalytic activity">
    <reaction evidence="1">
        <text>L-histidyl-[protein] + UTP = N(tele)-(5'-uridylyl)-L-histidyl-[protein] + diphosphate</text>
        <dbReference type="Rhea" id="RHEA:83891"/>
        <dbReference type="Rhea" id="RHEA-COMP:9745"/>
        <dbReference type="Rhea" id="RHEA-COMP:20239"/>
        <dbReference type="ChEBI" id="CHEBI:29979"/>
        <dbReference type="ChEBI" id="CHEBI:33019"/>
        <dbReference type="ChEBI" id="CHEBI:46398"/>
        <dbReference type="ChEBI" id="CHEBI:233474"/>
    </reaction>
</comment>
<comment type="catalytic activity">
    <reaction evidence="1">
        <text>L-seryl-[protein] + UTP = O-(5'-uridylyl)-L-seryl-[protein] + diphosphate</text>
        <dbReference type="Rhea" id="RHEA:64604"/>
        <dbReference type="Rhea" id="RHEA-COMP:9863"/>
        <dbReference type="Rhea" id="RHEA-COMP:16635"/>
        <dbReference type="ChEBI" id="CHEBI:29999"/>
        <dbReference type="ChEBI" id="CHEBI:33019"/>
        <dbReference type="ChEBI" id="CHEBI:46398"/>
        <dbReference type="ChEBI" id="CHEBI:156051"/>
    </reaction>
</comment>
<comment type="catalytic activity">
    <reaction evidence="1">
        <text>L-tyrosyl-[protein] + UTP = O-(5'-uridylyl)-L-tyrosyl-[protein] + diphosphate</text>
        <dbReference type="Rhea" id="RHEA:83887"/>
        <dbReference type="Rhea" id="RHEA-COMP:10136"/>
        <dbReference type="Rhea" id="RHEA-COMP:20238"/>
        <dbReference type="ChEBI" id="CHEBI:33019"/>
        <dbReference type="ChEBI" id="CHEBI:46398"/>
        <dbReference type="ChEBI" id="CHEBI:46858"/>
        <dbReference type="ChEBI" id="CHEBI:90602"/>
    </reaction>
</comment>
<comment type="cofactor">
    <cofactor evidence="1">
        <name>Mg(2+)</name>
        <dbReference type="ChEBI" id="CHEBI:18420"/>
    </cofactor>
    <cofactor evidence="1">
        <name>Mn(2+)</name>
        <dbReference type="ChEBI" id="CHEBI:29035"/>
    </cofactor>
</comment>
<comment type="similarity">
    <text evidence="1">Belongs to the SELO family.</text>
</comment>
<sequence>MPAEPIWPFDNSYARLPERFFARVRPTPVAQPGLVRLNEPLAEALGLEVAALRGKAGLAMFAGNRLPEGAEPIALAYAGHQFGQWVPQLGDGRAVLLGEVVDRDGRRRDIQLKGSGITPFSRGGDGRAPIGPVVREYLASEAMHALGIPTTRSLAAVTTGEPVLRERVEPGGILTRVAHSHVRVGTFEYFHWREDVDALRTLADYVIARHYPELADDARPHLALLKAVIDRTAELVAHWISVGFIHGVMNTDNTSLVGETLDYGPFGFLDAYHPRTCYSAIDIENRYAFDQQPRIAHWNLTRLAETLLPLLHEDEDEAVARAGEALNGFLPRFEACHHARLRAKLGLAESRRGDIDLAHELLDLMARQQADFTQVFRALSDERMDDPDEGPARRCFARPEALDGWRARWIQRLRQEGRPEPARQAAMRAVNPKFILRNHLAQWAVDAATERGDFGPMDRLLQVLTRPYDPQPEAEALAAPPRPEQQVYQTFCGT</sequence>
<protein>
    <recommendedName>
        <fullName evidence="1">Protein nucleotidyltransferase YdiU</fullName>
        <ecNumber evidence="1">2.7.7.-</ecNumber>
    </recommendedName>
    <alternativeName>
        <fullName evidence="1">Protein adenylyltransferase YdiU</fullName>
        <ecNumber evidence="1">2.7.7.108</ecNumber>
    </alternativeName>
    <alternativeName>
        <fullName evidence="1">Protein uridylyltransferase YdiU</fullName>
        <ecNumber evidence="1">2.7.7.-</ecNumber>
    </alternativeName>
</protein>
<gene>
    <name evidence="1" type="primary">ydiU</name>
    <name evidence="1" type="synonym">selO</name>
    <name type="ordered locus">Mlg_1045</name>
</gene>
<reference key="1">
    <citation type="submission" date="2006-08" db="EMBL/GenBank/DDBJ databases">
        <title>Complete sequence of Alkalilimnicola ehrilichei MLHE-1.</title>
        <authorList>
            <person name="Copeland A."/>
            <person name="Lucas S."/>
            <person name="Lapidus A."/>
            <person name="Barry K."/>
            <person name="Detter J.C."/>
            <person name="Glavina del Rio T."/>
            <person name="Hammon N."/>
            <person name="Israni S."/>
            <person name="Dalin E."/>
            <person name="Tice H."/>
            <person name="Pitluck S."/>
            <person name="Sims D."/>
            <person name="Brettin T."/>
            <person name="Bruce D."/>
            <person name="Han C."/>
            <person name="Tapia R."/>
            <person name="Gilna P."/>
            <person name="Schmutz J."/>
            <person name="Larimer F."/>
            <person name="Land M."/>
            <person name="Hauser L."/>
            <person name="Kyrpides N."/>
            <person name="Mikhailova N."/>
            <person name="Oremland R.S."/>
            <person name="Hoeft S.E."/>
            <person name="Switzer-Blum J."/>
            <person name="Kulp T."/>
            <person name="King G."/>
            <person name="Tabita R."/>
            <person name="Witte B."/>
            <person name="Santini J.M."/>
            <person name="Basu P."/>
            <person name="Hollibaugh J.T."/>
            <person name="Xie G."/>
            <person name="Stolz J.F."/>
            <person name="Richardson P."/>
        </authorList>
    </citation>
    <scope>NUCLEOTIDE SEQUENCE [LARGE SCALE GENOMIC DNA]</scope>
    <source>
        <strain>ATCC BAA-1101 / DSM 17681 / MLHE-1</strain>
    </source>
</reference>
<organism>
    <name type="scientific">Alkalilimnicola ehrlichii (strain ATCC BAA-1101 / DSM 17681 / MLHE-1)</name>
    <dbReference type="NCBI Taxonomy" id="187272"/>
    <lineage>
        <taxon>Bacteria</taxon>
        <taxon>Pseudomonadati</taxon>
        <taxon>Pseudomonadota</taxon>
        <taxon>Gammaproteobacteria</taxon>
        <taxon>Chromatiales</taxon>
        <taxon>Ectothiorhodospiraceae</taxon>
        <taxon>Alkalilimnicola</taxon>
    </lineage>
</organism>
<keyword id="KW-0067">ATP-binding</keyword>
<keyword id="KW-0460">Magnesium</keyword>
<keyword id="KW-0464">Manganese</keyword>
<keyword id="KW-0479">Metal-binding</keyword>
<keyword id="KW-0547">Nucleotide-binding</keyword>
<keyword id="KW-0548">Nucleotidyltransferase</keyword>
<keyword id="KW-1185">Reference proteome</keyword>
<keyword id="KW-0808">Transferase</keyword>
<accession>Q0A9T9</accession>
<feature type="chain" id="PRO_0000271803" description="Protein nucleotidyltransferase YdiU">
    <location>
        <begin position="1"/>
        <end position="494"/>
    </location>
</feature>
<feature type="active site" description="Proton acceptor" evidence="1">
    <location>
        <position position="252"/>
    </location>
</feature>
<feature type="binding site" evidence="1">
    <location>
        <position position="90"/>
    </location>
    <ligand>
        <name>ATP</name>
        <dbReference type="ChEBI" id="CHEBI:30616"/>
    </ligand>
</feature>
<feature type="binding site" evidence="1">
    <location>
        <position position="92"/>
    </location>
    <ligand>
        <name>ATP</name>
        <dbReference type="ChEBI" id="CHEBI:30616"/>
    </ligand>
</feature>
<feature type="binding site" evidence="1">
    <location>
        <position position="93"/>
    </location>
    <ligand>
        <name>ATP</name>
        <dbReference type="ChEBI" id="CHEBI:30616"/>
    </ligand>
</feature>
<feature type="binding site" evidence="1">
    <location>
        <position position="113"/>
    </location>
    <ligand>
        <name>ATP</name>
        <dbReference type="ChEBI" id="CHEBI:30616"/>
    </ligand>
</feature>
<feature type="binding site" evidence="1">
    <location>
        <position position="125"/>
    </location>
    <ligand>
        <name>ATP</name>
        <dbReference type="ChEBI" id="CHEBI:30616"/>
    </ligand>
</feature>
<feature type="binding site" evidence="1">
    <location>
        <position position="126"/>
    </location>
    <ligand>
        <name>ATP</name>
        <dbReference type="ChEBI" id="CHEBI:30616"/>
    </ligand>
</feature>
<feature type="binding site" evidence="1">
    <location>
        <position position="176"/>
    </location>
    <ligand>
        <name>ATP</name>
        <dbReference type="ChEBI" id="CHEBI:30616"/>
    </ligand>
</feature>
<feature type="binding site" evidence="1">
    <location>
        <position position="183"/>
    </location>
    <ligand>
        <name>ATP</name>
        <dbReference type="ChEBI" id="CHEBI:30616"/>
    </ligand>
</feature>
<feature type="binding site" evidence="1">
    <location>
        <position position="253"/>
    </location>
    <ligand>
        <name>Mg(2+)</name>
        <dbReference type="ChEBI" id="CHEBI:18420"/>
    </ligand>
</feature>
<feature type="binding site" evidence="1">
    <location>
        <position position="262"/>
    </location>
    <ligand>
        <name>ATP</name>
        <dbReference type="ChEBI" id="CHEBI:30616"/>
    </ligand>
</feature>
<feature type="binding site" evidence="1">
    <location>
        <position position="262"/>
    </location>
    <ligand>
        <name>Mg(2+)</name>
        <dbReference type="ChEBI" id="CHEBI:18420"/>
    </ligand>
</feature>
<proteinExistence type="inferred from homology"/>
<name>SELO_ALKEH</name>